<reference key="1">
    <citation type="journal article" date="2005" name="Gene">
        <title>The first complete chloroplast genome sequence of a lycophyte, Huperzia lucidula (Lycopodiaceae).</title>
        <authorList>
            <person name="Wolf P.G."/>
            <person name="Karol K.G."/>
            <person name="Mandoli D.F."/>
            <person name="Kuehl J.V."/>
            <person name="Arumuganathan K."/>
            <person name="Ellis M.W."/>
            <person name="Mishler B.D."/>
            <person name="Kelch D.G."/>
            <person name="Olmstead R.G."/>
            <person name="Boore J.L."/>
        </authorList>
    </citation>
    <scope>NUCLEOTIDE SEQUENCE [LARGE SCALE GENOMIC DNA]</scope>
</reference>
<sequence>MNAYAVIETGGEQLRVEPGRFYDVRHFASLNPENLGPNSKILIYRVLMICDESTINIGHPWLKGAMIKGRILHSRLDNKITVYRMRSKKKTRRKLGHRQKLIRFVVDSICSDVKDLYKQKD</sequence>
<gene>
    <name evidence="1" type="primary">rpl21</name>
</gene>
<name>RK21_HUPLU</name>
<geneLocation type="chloroplast"/>
<accession>Q5SD00</accession>
<dbReference type="EMBL" id="AY660566">
    <property type="protein sequence ID" value="AAT80766.1"/>
    <property type="molecule type" value="Genomic_DNA"/>
</dbReference>
<dbReference type="RefSeq" id="YP_209570.1">
    <property type="nucleotide sequence ID" value="NC_006861.1"/>
</dbReference>
<dbReference type="SMR" id="Q5SD00"/>
<dbReference type="GeneID" id="3283793"/>
<dbReference type="GO" id="GO:0009507">
    <property type="term" value="C:chloroplast"/>
    <property type="evidence" value="ECO:0007669"/>
    <property type="project" value="UniProtKB-SubCell"/>
</dbReference>
<dbReference type="GO" id="GO:1990904">
    <property type="term" value="C:ribonucleoprotein complex"/>
    <property type="evidence" value="ECO:0007669"/>
    <property type="project" value="UniProtKB-KW"/>
</dbReference>
<dbReference type="GO" id="GO:0005840">
    <property type="term" value="C:ribosome"/>
    <property type="evidence" value="ECO:0007669"/>
    <property type="project" value="UniProtKB-KW"/>
</dbReference>
<dbReference type="GO" id="GO:0019843">
    <property type="term" value="F:rRNA binding"/>
    <property type="evidence" value="ECO:0007669"/>
    <property type="project" value="UniProtKB-UniRule"/>
</dbReference>
<dbReference type="GO" id="GO:0003735">
    <property type="term" value="F:structural constituent of ribosome"/>
    <property type="evidence" value="ECO:0007669"/>
    <property type="project" value="InterPro"/>
</dbReference>
<dbReference type="GO" id="GO:0006412">
    <property type="term" value="P:translation"/>
    <property type="evidence" value="ECO:0007669"/>
    <property type="project" value="UniProtKB-UniRule"/>
</dbReference>
<dbReference type="HAMAP" id="MF_01363">
    <property type="entry name" value="Ribosomal_bL21"/>
    <property type="match status" value="1"/>
</dbReference>
<dbReference type="InterPro" id="IPR028909">
    <property type="entry name" value="bL21-like"/>
</dbReference>
<dbReference type="InterPro" id="IPR036164">
    <property type="entry name" value="bL21-like_sf"/>
</dbReference>
<dbReference type="InterPro" id="IPR001787">
    <property type="entry name" value="Ribosomal_bL21"/>
</dbReference>
<dbReference type="NCBIfam" id="TIGR00061">
    <property type="entry name" value="L21"/>
    <property type="match status" value="1"/>
</dbReference>
<dbReference type="PANTHER" id="PTHR21349">
    <property type="entry name" value="50S RIBOSOMAL PROTEIN L21"/>
    <property type="match status" value="1"/>
</dbReference>
<dbReference type="PANTHER" id="PTHR21349:SF0">
    <property type="entry name" value="LARGE RIBOSOMAL SUBUNIT PROTEIN BL21M"/>
    <property type="match status" value="1"/>
</dbReference>
<dbReference type="Pfam" id="PF00829">
    <property type="entry name" value="Ribosomal_L21p"/>
    <property type="match status" value="1"/>
</dbReference>
<dbReference type="SUPFAM" id="SSF141091">
    <property type="entry name" value="L21p-like"/>
    <property type="match status" value="1"/>
</dbReference>
<evidence type="ECO:0000255" key="1">
    <source>
        <dbReference type="HAMAP-Rule" id="MF_01363"/>
    </source>
</evidence>
<evidence type="ECO:0000305" key="2"/>
<keyword id="KW-0150">Chloroplast</keyword>
<keyword id="KW-0934">Plastid</keyword>
<keyword id="KW-0687">Ribonucleoprotein</keyword>
<keyword id="KW-0689">Ribosomal protein</keyword>
<keyword id="KW-0694">RNA-binding</keyword>
<keyword id="KW-0699">rRNA-binding</keyword>
<organism>
    <name type="scientific">Huperzia lucidula</name>
    <name type="common">Shining clubmoss</name>
    <name type="synonym">Lycopodium lucidulum</name>
    <dbReference type="NCBI Taxonomy" id="37429"/>
    <lineage>
        <taxon>Eukaryota</taxon>
        <taxon>Viridiplantae</taxon>
        <taxon>Streptophyta</taxon>
        <taxon>Embryophyta</taxon>
        <taxon>Tracheophyta</taxon>
        <taxon>Lycopodiopsida</taxon>
        <taxon>Lycopodiales</taxon>
        <taxon>Lycopodiaceae</taxon>
        <taxon>Huperzioideae</taxon>
        <taxon>Huperzia</taxon>
    </lineage>
</organism>
<proteinExistence type="inferred from homology"/>
<feature type="chain" id="PRO_0000269446" description="Large ribosomal subunit protein bL21c">
    <location>
        <begin position="1"/>
        <end position="121"/>
    </location>
</feature>
<protein>
    <recommendedName>
        <fullName evidence="1">Large ribosomal subunit protein bL21c</fullName>
    </recommendedName>
    <alternativeName>
        <fullName evidence="2">50S ribosomal protein L21, chloroplastic</fullName>
    </alternativeName>
</protein>
<comment type="function">
    <text evidence="1">This protein binds to 23S rRNA.</text>
</comment>
<comment type="subunit">
    <text evidence="1">Part of the 50S ribosomal subunit.</text>
</comment>
<comment type="subcellular location">
    <subcellularLocation>
        <location>Plastid</location>
        <location>Chloroplast</location>
    </subcellularLocation>
</comment>
<comment type="similarity">
    <text evidence="1">Belongs to the bacterial ribosomal protein bL21 family.</text>
</comment>